<organism>
    <name type="scientific">Synechocystis sp. (strain ATCC 27184 / PCC 6803 / Kazusa)</name>
    <dbReference type="NCBI Taxonomy" id="1111708"/>
    <lineage>
        <taxon>Bacteria</taxon>
        <taxon>Bacillati</taxon>
        <taxon>Cyanobacteriota</taxon>
        <taxon>Cyanophyceae</taxon>
        <taxon>Synechococcales</taxon>
        <taxon>Merismopediaceae</taxon>
        <taxon>Synechocystis</taxon>
    </lineage>
</organism>
<comment type="function">
    <text evidence="1">Catalyzes the sequential NAD-dependent oxidations of L-histidinol to L-histidinaldehyde and then to L-histidine.</text>
</comment>
<comment type="catalytic activity">
    <reaction>
        <text>L-histidinol + 2 NAD(+) + H2O = L-histidine + 2 NADH + 3 H(+)</text>
        <dbReference type="Rhea" id="RHEA:20641"/>
        <dbReference type="ChEBI" id="CHEBI:15377"/>
        <dbReference type="ChEBI" id="CHEBI:15378"/>
        <dbReference type="ChEBI" id="CHEBI:57540"/>
        <dbReference type="ChEBI" id="CHEBI:57595"/>
        <dbReference type="ChEBI" id="CHEBI:57699"/>
        <dbReference type="ChEBI" id="CHEBI:57945"/>
        <dbReference type="EC" id="1.1.1.23"/>
    </reaction>
</comment>
<comment type="cofactor">
    <cofactor evidence="1">
        <name>Zn(2+)</name>
        <dbReference type="ChEBI" id="CHEBI:29105"/>
    </cofactor>
    <text evidence="1">Binds 1 zinc ion per subunit.</text>
</comment>
<comment type="pathway">
    <text>Amino-acid biosynthesis; L-histidine biosynthesis; L-histidine from 5-phospho-alpha-D-ribose 1-diphosphate: step 9/9.</text>
</comment>
<comment type="similarity">
    <text evidence="2">Belongs to the histidinol dehydrogenase family.</text>
</comment>
<comment type="caution">
    <text evidence="2">The conserved zinc-binding site Asp residue in position 364 is replaced by a Thr.</text>
</comment>
<keyword id="KW-0028">Amino-acid biosynthesis</keyword>
<keyword id="KW-0368">Histidine biosynthesis</keyword>
<keyword id="KW-0479">Metal-binding</keyword>
<keyword id="KW-0520">NAD</keyword>
<keyword id="KW-0560">Oxidoreductase</keyword>
<keyword id="KW-1185">Reference proteome</keyword>
<keyword id="KW-0862">Zinc</keyword>
<gene>
    <name type="primary">hisD</name>
    <name type="ordered locus">slr1848</name>
</gene>
<dbReference type="EC" id="1.1.1.23"/>
<dbReference type="EMBL" id="BA000022">
    <property type="protein sequence ID" value="BAA17080.1"/>
    <property type="molecule type" value="Genomic_DNA"/>
</dbReference>
<dbReference type="PIR" id="S75166">
    <property type="entry name" value="S75166"/>
</dbReference>
<dbReference type="SMR" id="P73058"/>
<dbReference type="FunCoup" id="P73058">
    <property type="interactions" value="499"/>
</dbReference>
<dbReference type="IntAct" id="P73058">
    <property type="interactions" value="3"/>
</dbReference>
<dbReference type="STRING" id="1148.gene:10497941"/>
<dbReference type="PaxDb" id="1148-1652156"/>
<dbReference type="EnsemblBacteria" id="BAA17080">
    <property type="protein sequence ID" value="BAA17080"/>
    <property type="gene ID" value="BAA17080"/>
</dbReference>
<dbReference type="KEGG" id="syn:slr1848"/>
<dbReference type="eggNOG" id="COG0141">
    <property type="taxonomic scope" value="Bacteria"/>
</dbReference>
<dbReference type="InParanoid" id="P73058"/>
<dbReference type="PhylomeDB" id="P73058"/>
<dbReference type="UniPathway" id="UPA00031">
    <property type="reaction ID" value="UER00014"/>
</dbReference>
<dbReference type="Proteomes" id="UP000001425">
    <property type="component" value="Chromosome"/>
</dbReference>
<dbReference type="GO" id="GO:0005737">
    <property type="term" value="C:cytoplasm"/>
    <property type="evidence" value="ECO:0000318"/>
    <property type="project" value="GO_Central"/>
</dbReference>
<dbReference type="GO" id="GO:0005829">
    <property type="term" value="C:cytosol"/>
    <property type="evidence" value="ECO:0000318"/>
    <property type="project" value="GO_Central"/>
</dbReference>
<dbReference type="GO" id="GO:0004399">
    <property type="term" value="F:histidinol dehydrogenase activity"/>
    <property type="evidence" value="ECO:0000318"/>
    <property type="project" value="GO_Central"/>
</dbReference>
<dbReference type="GO" id="GO:0046872">
    <property type="term" value="F:metal ion binding"/>
    <property type="evidence" value="ECO:0007669"/>
    <property type="project" value="UniProtKB-KW"/>
</dbReference>
<dbReference type="GO" id="GO:0051287">
    <property type="term" value="F:NAD binding"/>
    <property type="evidence" value="ECO:0007669"/>
    <property type="project" value="InterPro"/>
</dbReference>
<dbReference type="GO" id="GO:0000105">
    <property type="term" value="P:L-histidine biosynthetic process"/>
    <property type="evidence" value="ECO:0000318"/>
    <property type="project" value="GO_Central"/>
</dbReference>
<dbReference type="CDD" id="cd06572">
    <property type="entry name" value="Histidinol_dh"/>
    <property type="match status" value="1"/>
</dbReference>
<dbReference type="FunFam" id="3.40.50.1980:FF:000001">
    <property type="entry name" value="Histidinol dehydrogenase"/>
    <property type="match status" value="1"/>
</dbReference>
<dbReference type="Gene3D" id="1.20.5.1300">
    <property type="match status" value="1"/>
</dbReference>
<dbReference type="Gene3D" id="3.40.50.1980">
    <property type="entry name" value="Nitrogenase molybdenum iron protein domain"/>
    <property type="match status" value="2"/>
</dbReference>
<dbReference type="InterPro" id="IPR016161">
    <property type="entry name" value="Ald_DH/histidinol_DH"/>
</dbReference>
<dbReference type="InterPro" id="IPR001692">
    <property type="entry name" value="Histidinol_DH_CS"/>
</dbReference>
<dbReference type="InterPro" id="IPR022695">
    <property type="entry name" value="Histidinol_DH_monofunct"/>
</dbReference>
<dbReference type="InterPro" id="IPR012131">
    <property type="entry name" value="Hstdl_DH"/>
</dbReference>
<dbReference type="NCBIfam" id="TIGR00069">
    <property type="entry name" value="hisD"/>
    <property type="match status" value="1"/>
</dbReference>
<dbReference type="PANTHER" id="PTHR21256:SF2">
    <property type="entry name" value="HISTIDINE BIOSYNTHESIS TRIFUNCTIONAL PROTEIN"/>
    <property type="match status" value="1"/>
</dbReference>
<dbReference type="PANTHER" id="PTHR21256">
    <property type="entry name" value="HISTIDINOL DEHYDROGENASE HDH"/>
    <property type="match status" value="1"/>
</dbReference>
<dbReference type="Pfam" id="PF00815">
    <property type="entry name" value="Histidinol_dh"/>
    <property type="match status" value="1"/>
</dbReference>
<dbReference type="PIRSF" id="PIRSF000099">
    <property type="entry name" value="Histidinol_dh"/>
    <property type="match status" value="1"/>
</dbReference>
<dbReference type="PRINTS" id="PR00083">
    <property type="entry name" value="HOLDHDRGNASE"/>
</dbReference>
<dbReference type="SUPFAM" id="SSF53720">
    <property type="entry name" value="ALDH-like"/>
    <property type="match status" value="1"/>
</dbReference>
<dbReference type="PROSITE" id="PS00611">
    <property type="entry name" value="HISOL_DEHYDROGENASE"/>
    <property type="match status" value="1"/>
</dbReference>
<sequence>MTRILKLSHLTPQQLNQLKRRSEQNIDQALAIAKEVIEQVKMEGDAGVLHYSRQFDFAGATAENLRVSEAEFAEAEKLVDPELRRAVEHAFRNIEKVHAGQMPPPMHLAEIEPGVFAGEKITPLPTVGLYVPRGKGAFPSMMLMLAVPARVAGVKKIVVCTPPDKEGKVEPVSLVTARMAGVDEVYKLGGVQALAAIAYGTKTVSKVDKLIGPCSIYGAAAKRLLSGIVDVGLPAGPSESIVLADETTDPKLAALDLLIEAEHGSDSAALLVTHSASLAEKALGYLGEYLEKLPPWRKKFCEDGLGSYGGILLTDSLQASLDFINDYAPEHLQVLTADPLKLVGKIDNAGEILLGNYTPSSAATYAIGVNAVLPTGGFARSYSAVSVFDFLKRSTLAYLTEEGFAGVKETVTTLADYEDFPAHALAIRERENLL</sequence>
<reference key="1">
    <citation type="journal article" date="1996" name="DNA Res.">
        <title>Sequence analysis of the genome of the unicellular cyanobacterium Synechocystis sp. strain PCC6803. II. Sequence determination of the entire genome and assignment of potential protein-coding regions.</title>
        <authorList>
            <person name="Kaneko T."/>
            <person name="Sato S."/>
            <person name="Kotani H."/>
            <person name="Tanaka A."/>
            <person name="Asamizu E."/>
            <person name="Nakamura Y."/>
            <person name="Miyajima N."/>
            <person name="Hirosawa M."/>
            <person name="Sugiura M."/>
            <person name="Sasamoto S."/>
            <person name="Kimura T."/>
            <person name="Hosouchi T."/>
            <person name="Matsuno A."/>
            <person name="Muraki A."/>
            <person name="Nakazaki N."/>
            <person name="Naruo K."/>
            <person name="Okumura S."/>
            <person name="Shimpo S."/>
            <person name="Takeuchi C."/>
            <person name="Wada T."/>
            <person name="Watanabe A."/>
            <person name="Yamada M."/>
            <person name="Yasuda M."/>
            <person name="Tabata S."/>
        </authorList>
    </citation>
    <scope>NUCLEOTIDE SEQUENCE [LARGE SCALE GENOMIC DNA]</scope>
    <source>
        <strain>ATCC 27184 / PCC 6803 / Kazusa</strain>
    </source>
</reference>
<evidence type="ECO:0000250" key="1"/>
<evidence type="ECO:0000305" key="2"/>
<name>HISX_SYNY3</name>
<accession>P73058</accession>
<proteinExistence type="inferred from homology"/>
<protein>
    <recommendedName>
        <fullName>Histidinol dehydrogenase</fullName>
        <shortName>HDH</shortName>
        <ecNumber>1.1.1.23</ecNumber>
    </recommendedName>
</protein>
<feature type="chain" id="PRO_0000135865" description="Histidinol dehydrogenase">
    <location>
        <begin position="1"/>
        <end position="434"/>
    </location>
</feature>
<feature type="active site" description="Proton acceptor" evidence="1">
    <location>
        <position position="330"/>
    </location>
</feature>
<feature type="active site" description="Proton acceptor" evidence="1">
    <location>
        <position position="331"/>
    </location>
</feature>
<feature type="binding site" evidence="1">
    <location>
        <position position="260"/>
    </location>
    <ligand>
        <name>Zn(2+)</name>
        <dbReference type="ChEBI" id="CHEBI:29105"/>
    </ligand>
</feature>
<feature type="binding site" evidence="1">
    <location>
        <position position="263"/>
    </location>
    <ligand>
        <name>Zn(2+)</name>
        <dbReference type="ChEBI" id="CHEBI:29105"/>
    </ligand>
</feature>
<feature type="binding site" evidence="1">
    <location>
        <position position="423"/>
    </location>
    <ligand>
        <name>Zn(2+)</name>
        <dbReference type="ChEBI" id="CHEBI:29105"/>
    </ligand>
</feature>